<keyword id="KW-0256">Endoplasmic reticulum</keyword>
<keyword id="KW-0333">Golgi apparatus</keyword>
<keyword id="KW-0472">Membrane</keyword>
<keyword id="KW-1185">Reference proteome</keyword>
<keyword id="KW-0732">Signal</keyword>
<keyword id="KW-0812">Transmembrane</keyword>
<keyword id="KW-1133">Transmembrane helix</keyword>
<comment type="function">
    <text evidence="2">Involved in the early part of the secretory pathway.</text>
</comment>
<comment type="subcellular location">
    <subcellularLocation>
        <location evidence="3">Endoplasmic reticulum membrane</location>
        <topology evidence="1">Single-pass type I membrane protein</topology>
    </subcellularLocation>
    <subcellularLocation>
        <location evidence="2">Golgi apparatus membrane</location>
        <topology evidence="1">Single-pass type I membrane protein</topology>
    </subcellularLocation>
</comment>
<comment type="disruption phenotype">
    <text evidence="2">Inviable.</text>
</comment>
<comment type="miscellaneous">
    <text evidence="6">'Kish' means small in Hungarian.</text>
</comment>
<comment type="similarity">
    <text evidence="5">Belongs to the KISH family.</text>
</comment>
<gene>
    <name evidence="4" type="primary">KSH1</name>
    <name evidence="7" type="ordered locus">YNL024C-A</name>
</gene>
<organism>
    <name type="scientific">Saccharomyces cerevisiae (strain ATCC 204508 / S288c)</name>
    <name type="common">Baker's yeast</name>
    <dbReference type="NCBI Taxonomy" id="559292"/>
    <lineage>
        <taxon>Eukaryota</taxon>
        <taxon>Fungi</taxon>
        <taxon>Dikarya</taxon>
        <taxon>Ascomycota</taxon>
        <taxon>Saccharomycotina</taxon>
        <taxon>Saccharomycetes</taxon>
        <taxon>Saccharomycetales</taxon>
        <taxon>Saccharomycetaceae</taxon>
        <taxon>Saccharomyces</taxon>
    </lineage>
</organism>
<evidence type="ECO:0000255" key="1"/>
<evidence type="ECO:0000269" key="2">
    <source>
    </source>
</evidence>
<evidence type="ECO:0000269" key="3">
    <source>
    </source>
</evidence>
<evidence type="ECO:0000303" key="4">
    <source>
    </source>
</evidence>
<evidence type="ECO:0000305" key="5"/>
<evidence type="ECO:0000305" key="6">
    <source>
    </source>
</evidence>
<evidence type="ECO:0000312" key="7">
    <source>
        <dbReference type="SGD" id="S000028698"/>
    </source>
</evidence>
<reference key="1">
    <citation type="journal article" date="1997" name="Nature">
        <title>The nucleotide sequence of Saccharomyces cerevisiae chromosome XIV and its evolutionary implications.</title>
        <authorList>
            <person name="Philippsen P."/>
            <person name="Kleine K."/>
            <person name="Poehlmann R."/>
            <person name="Duesterhoeft A."/>
            <person name="Hamberg K."/>
            <person name="Hegemann J.H."/>
            <person name="Obermaier B."/>
            <person name="Urrestarazu L.A."/>
            <person name="Aert R."/>
            <person name="Albermann K."/>
            <person name="Altmann R."/>
            <person name="Andre B."/>
            <person name="Baladron V."/>
            <person name="Ballesta J.P.G."/>
            <person name="Becam A.-M."/>
            <person name="Beinhauer J.D."/>
            <person name="Boskovic J."/>
            <person name="Buitrago M.J."/>
            <person name="Bussereau F."/>
            <person name="Coster F."/>
            <person name="Crouzet M."/>
            <person name="D'Angelo M."/>
            <person name="Dal Pero F."/>
            <person name="De Antoni A."/>
            <person name="del Rey F."/>
            <person name="Doignon F."/>
            <person name="Domdey H."/>
            <person name="Dubois E."/>
            <person name="Fiedler T.A."/>
            <person name="Fleig U."/>
            <person name="Floeth M."/>
            <person name="Fritz C."/>
            <person name="Gaillardin C."/>
            <person name="Garcia-Cantalejo J.M."/>
            <person name="Glansdorff N."/>
            <person name="Goffeau A."/>
            <person name="Gueldener U."/>
            <person name="Herbert C.J."/>
            <person name="Heumann K."/>
            <person name="Heuss-Neitzel D."/>
            <person name="Hilbert H."/>
            <person name="Hinni K."/>
            <person name="Iraqui Houssaini I."/>
            <person name="Jacquet M."/>
            <person name="Jimenez A."/>
            <person name="Jonniaux J.-L."/>
            <person name="Karpfinger-Hartl L."/>
            <person name="Lanfranchi G."/>
            <person name="Lepingle A."/>
            <person name="Levesque H."/>
            <person name="Lyck R."/>
            <person name="Maftahi M."/>
            <person name="Mallet L."/>
            <person name="Maurer C.T.C."/>
            <person name="Messenguy F."/>
            <person name="Mewes H.-W."/>
            <person name="Moestl D."/>
            <person name="Nasr F."/>
            <person name="Nicaud J.-M."/>
            <person name="Niedenthal R.K."/>
            <person name="Pandolfo D."/>
            <person name="Pierard A."/>
            <person name="Piravandi E."/>
            <person name="Planta R.J."/>
            <person name="Pohl T.M."/>
            <person name="Purnelle B."/>
            <person name="Rebischung C."/>
            <person name="Remacha M.A."/>
            <person name="Revuelta J.L."/>
            <person name="Rinke M."/>
            <person name="Saiz J.E."/>
            <person name="Sartorello F."/>
            <person name="Scherens B."/>
            <person name="Sen-Gupta M."/>
            <person name="Soler-Mira A."/>
            <person name="Urbanus J.H.M."/>
            <person name="Valle G."/>
            <person name="Van Dyck L."/>
            <person name="Verhasselt P."/>
            <person name="Vierendeels F."/>
            <person name="Vissers S."/>
            <person name="Voet M."/>
            <person name="Volckaert G."/>
            <person name="Wach A."/>
            <person name="Wambutt R."/>
            <person name="Wedler H."/>
            <person name="Zollner A."/>
            <person name="Hani J."/>
        </authorList>
    </citation>
    <scope>NUCLEOTIDE SEQUENCE [LARGE SCALE GENOMIC DNA]</scope>
    <source>
        <strain>ATCC 204508 / S288c</strain>
    </source>
</reference>
<reference key="2">
    <citation type="journal article" date="2014" name="G3 (Bethesda)">
        <title>The reference genome sequence of Saccharomyces cerevisiae: Then and now.</title>
        <authorList>
            <person name="Engel S.R."/>
            <person name="Dietrich F.S."/>
            <person name="Fisk D.G."/>
            <person name="Binkley G."/>
            <person name="Balakrishnan R."/>
            <person name="Costanzo M.C."/>
            <person name="Dwight S.S."/>
            <person name="Hitz B.C."/>
            <person name="Karra K."/>
            <person name="Nash R.S."/>
            <person name="Weng S."/>
            <person name="Wong E.D."/>
            <person name="Lloyd P."/>
            <person name="Skrzypek M.S."/>
            <person name="Miyasato S.R."/>
            <person name="Simison M."/>
            <person name="Cherry J.M."/>
        </authorList>
    </citation>
    <scope>GENOME REANNOTATION</scope>
    <source>
        <strain>ATCC 204508 / S288c</strain>
    </source>
</reference>
<reference key="3">
    <citation type="journal article" date="2002" name="Nat. Biotechnol.">
        <title>An integrated approach for finding overlooked genes in yeast.</title>
        <authorList>
            <person name="Kumar A."/>
            <person name="Harrison P.M."/>
            <person name="Cheung K.-H."/>
            <person name="Lan N."/>
            <person name="Echols N."/>
            <person name="Bertone P."/>
            <person name="Miller P."/>
            <person name="Gerstein M.B."/>
            <person name="Snyder M."/>
        </authorList>
    </citation>
    <scope>NUCLEOTIDE SEQUENCE [GENOMIC DNA]</scope>
</reference>
<reference key="4">
    <citation type="journal article" date="2010" name="EMBO J.">
        <title>A genome-wide RNA interference screen identifies two novel components of the metazoan secretory pathway.</title>
        <authorList>
            <person name="Wendler F."/>
            <person name="Gillingham A.K."/>
            <person name="Sinka R."/>
            <person name="Rosa-Ferreira C."/>
            <person name="Gordon D.E."/>
            <person name="Franch-Marro X."/>
            <person name="Peden A.A."/>
            <person name="Vincent J.P."/>
            <person name="Munro S."/>
        </authorList>
    </citation>
    <scope>FUNCTION</scope>
    <scope>SUBCELLULAR LOCATION</scope>
    <scope>DISRUPTION PHENOTYPE</scope>
</reference>
<reference key="5">
    <citation type="journal article" date="2016" name="Nat. Methods">
        <title>One library to make them all: streamlining the creation of yeast libraries via a SWAp-Tag strategy.</title>
        <authorList>
            <person name="Yofe I."/>
            <person name="Weill U."/>
            <person name="Meurer M."/>
            <person name="Chuartzman S."/>
            <person name="Zalckvar E."/>
            <person name="Goldman O."/>
            <person name="Ben-Dor S."/>
            <person name="Schuetze C."/>
            <person name="Wiedemann N."/>
            <person name="Knop M."/>
            <person name="Khmelinskii A."/>
            <person name="Schuldiner M."/>
        </authorList>
    </citation>
    <scope>SUBCELLULAR LOCATION</scope>
</reference>
<reference key="6">
    <citation type="journal article" date="2018" name="J. Proteome Res.">
        <title>Enrichment-based proteogenomics identifies microproteins, missing proteins, and novel smORFs in Saccharomyces cerevisiae.</title>
        <authorList>
            <person name="He C."/>
            <person name="Jia C."/>
            <person name="Zhang Y."/>
            <person name="Xu P."/>
        </authorList>
    </citation>
    <scope>IDENTIFICATION BY MASS SPECTROMETRY</scope>
</reference>
<proteinExistence type="evidence at protein level"/>
<name>KISH_YEAST</name>
<protein>
    <recommendedName>
        <fullName evidence="4">Protein Kish</fullName>
    </recommendedName>
</protein>
<sequence length="72" mass="8196">MSALFNFRSLLQVILLLICSCSYVHGQWPSLLDRYKNHEVLGAFWKMARVGERASPYVSLACILMAISQFNS</sequence>
<accession>Q8TGJ3</accession>
<accession>D6W1F4</accession>
<feature type="signal peptide" evidence="1">
    <location>
        <begin position="1"/>
        <end position="26"/>
    </location>
</feature>
<feature type="chain" id="PRO_0000247775" description="Protein Kish">
    <location>
        <begin position="27"/>
        <end position="72"/>
    </location>
</feature>
<feature type="topological domain" description="Lumenal" evidence="1">
    <location>
        <begin position="27"/>
        <end position="53"/>
    </location>
</feature>
<feature type="transmembrane region" description="Helical" evidence="1">
    <location>
        <begin position="54"/>
        <end position="72"/>
    </location>
</feature>
<dbReference type="EMBL" id="Z71300">
    <property type="status" value="NOT_ANNOTATED_CDS"/>
    <property type="molecule type" value="Genomic_DNA"/>
</dbReference>
<dbReference type="EMBL" id="Z71301">
    <property type="status" value="NOT_ANNOTATED_CDS"/>
    <property type="molecule type" value="Genomic_DNA"/>
</dbReference>
<dbReference type="EMBL" id="AF480014">
    <property type="protein sequence ID" value="AAL79327.1"/>
    <property type="molecule type" value="Genomic_DNA"/>
</dbReference>
<dbReference type="EMBL" id="BK006947">
    <property type="protein sequence ID" value="DAA10520.1"/>
    <property type="molecule type" value="Genomic_DNA"/>
</dbReference>
<dbReference type="RefSeq" id="NP_878158.3">
    <property type="nucleotide sequence ID" value="NM_001184619.3"/>
</dbReference>
<dbReference type="BioGRID" id="37058">
    <property type="interactions" value="5"/>
</dbReference>
<dbReference type="FunCoup" id="Q8TGJ3">
    <property type="interactions" value="248"/>
</dbReference>
<dbReference type="STRING" id="4932.YNL024C-A"/>
<dbReference type="PaxDb" id="4932-YNL024C-A"/>
<dbReference type="PeptideAtlas" id="Q8TGJ3"/>
<dbReference type="EnsemblFungi" id="YNL024C-A_mRNA">
    <property type="protein sequence ID" value="YNL024C-A"/>
    <property type="gene ID" value="YNL024C-A"/>
</dbReference>
<dbReference type="GeneID" id="1466516"/>
<dbReference type="KEGG" id="sce:YNL024C-A"/>
<dbReference type="AGR" id="SGD:S000028698"/>
<dbReference type="SGD" id="S000028698">
    <property type="gene designation" value="KSH1"/>
</dbReference>
<dbReference type="VEuPathDB" id="FungiDB:YNL024C-A"/>
<dbReference type="eggNOG" id="KOG3808">
    <property type="taxonomic scope" value="Eukaryota"/>
</dbReference>
<dbReference type="GeneTree" id="ENSGT00940000155186"/>
<dbReference type="HOGENOM" id="CLU_152663_1_0_1"/>
<dbReference type="InParanoid" id="Q8TGJ3"/>
<dbReference type="OMA" id="KVGFQGT"/>
<dbReference type="OrthoDB" id="10034655at2759"/>
<dbReference type="BioCyc" id="YEAST:G3O-33410-MONOMER"/>
<dbReference type="PRO" id="PR:Q8TGJ3"/>
<dbReference type="Proteomes" id="UP000002311">
    <property type="component" value="Chromosome XIV"/>
</dbReference>
<dbReference type="RNAct" id="Q8TGJ3">
    <property type="molecule type" value="protein"/>
</dbReference>
<dbReference type="GO" id="GO:0005789">
    <property type="term" value="C:endoplasmic reticulum membrane"/>
    <property type="evidence" value="ECO:0007669"/>
    <property type="project" value="UniProtKB-SubCell"/>
</dbReference>
<dbReference type="GO" id="GO:0005794">
    <property type="term" value="C:Golgi apparatus"/>
    <property type="evidence" value="ECO:0000314"/>
    <property type="project" value="UniProtKB"/>
</dbReference>
<dbReference type="GO" id="GO:0000139">
    <property type="term" value="C:Golgi membrane"/>
    <property type="evidence" value="ECO:0007669"/>
    <property type="project" value="UniProtKB-SubCell"/>
</dbReference>
<dbReference type="GO" id="GO:0046907">
    <property type="term" value="P:intracellular transport"/>
    <property type="evidence" value="ECO:0000318"/>
    <property type="project" value="GO_Central"/>
</dbReference>
<dbReference type="GO" id="GO:0009306">
    <property type="term" value="P:protein secretion"/>
    <property type="evidence" value="ECO:0000318"/>
    <property type="project" value="GO_Central"/>
</dbReference>
<dbReference type="InterPro" id="IPR051523">
    <property type="entry name" value="KISH_domain"/>
</dbReference>
<dbReference type="InterPro" id="IPR009653">
    <property type="entry name" value="Ksh1"/>
</dbReference>
<dbReference type="PANTHER" id="PTHR13229">
    <property type="entry name" value="PROTEIN KISH-A"/>
    <property type="match status" value="1"/>
</dbReference>
<dbReference type="Pfam" id="PF06842">
    <property type="entry name" value="DUF1242"/>
    <property type="match status" value="1"/>
</dbReference>